<name>RS19_CORA7</name>
<accession>C3PKQ6</accession>
<protein>
    <recommendedName>
        <fullName evidence="1">Small ribosomal subunit protein uS19</fullName>
    </recommendedName>
    <alternativeName>
        <fullName evidence="2">30S ribosomal protein S19</fullName>
    </alternativeName>
</protein>
<gene>
    <name evidence="1" type="primary">rpsS</name>
    <name type="ordered locus">cauri_0393</name>
</gene>
<evidence type="ECO:0000255" key="1">
    <source>
        <dbReference type="HAMAP-Rule" id="MF_00531"/>
    </source>
</evidence>
<evidence type="ECO:0000305" key="2"/>
<proteinExistence type="inferred from homology"/>
<feature type="chain" id="PRO_1000146383" description="Small ribosomal subunit protein uS19">
    <location>
        <begin position="1"/>
        <end position="92"/>
    </location>
</feature>
<organism>
    <name type="scientific">Corynebacterium aurimucosum (strain ATCC 700975 / DSM 44827 / CIP 107346 / CN-1)</name>
    <name type="common">Corynebacterium nigricans</name>
    <dbReference type="NCBI Taxonomy" id="548476"/>
    <lineage>
        <taxon>Bacteria</taxon>
        <taxon>Bacillati</taxon>
        <taxon>Actinomycetota</taxon>
        <taxon>Actinomycetes</taxon>
        <taxon>Mycobacteriales</taxon>
        <taxon>Corynebacteriaceae</taxon>
        <taxon>Corynebacterium</taxon>
    </lineage>
</organism>
<reference key="1">
    <citation type="journal article" date="2010" name="BMC Genomics">
        <title>Complete genome sequence and lifestyle of black-pigmented Corynebacterium aurimucosum ATCC 700975 (formerly C. nigricans CN-1) isolated from a vaginal swab of a woman with spontaneous abortion.</title>
        <authorList>
            <person name="Trost E."/>
            <person name="Gotker S."/>
            <person name="Schneider J."/>
            <person name="Schneiker-Bekel S."/>
            <person name="Szczepanowski R."/>
            <person name="Tilker A."/>
            <person name="Viehoever P."/>
            <person name="Arnold W."/>
            <person name="Bekel T."/>
            <person name="Blom J."/>
            <person name="Gartemann K.H."/>
            <person name="Linke B."/>
            <person name="Goesmann A."/>
            <person name="Puhler A."/>
            <person name="Shukla S.K."/>
            <person name="Tauch A."/>
        </authorList>
    </citation>
    <scope>NUCLEOTIDE SEQUENCE [LARGE SCALE GENOMIC DNA]</scope>
    <source>
        <strain>ATCC 700975 / DSM 44827 / CIP 107346 / CN-1</strain>
    </source>
</reference>
<sequence>MPRSLKKGPFVDEHLLNKVDAQNEAGTKQVIKTWSRRSTILPDFIGHTFAVHDGRKHVPVFVEDSMVGHKLGEFAPTKTFKGHVKDDKKGRR</sequence>
<dbReference type="EMBL" id="CP001601">
    <property type="protein sequence ID" value="ACP31992.1"/>
    <property type="molecule type" value="Genomic_DNA"/>
</dbReference>
<dbReference type="RefSeq" id="WP_010189646.1">
    <property type="nucleotide sequence ID" value="NZ_ACLH01000066.1"/>
</dbReference>
<dbReference type="SMR" id="C3PKQ6"/>
<dbReference type="STRING" id="548476.cauri_0393"/>
<dbReference type="GeneID" id="70784011"/>
<dbReference type="KEGG" id="car:cauri_0393"/>
<dbReference type="eggNOG" id="COG0185">
    <property type="taxonomic scope" value="Bacteria"/>
</dbReference>
<dbReference type="HOGENOM" id="CLU_144911_0_1_11"/>
<dbReference type="OrthoDB" id="9797833at2"/>
<dbReference type="Proteomes" id="UP000002077">
    <property type="component" value="Chromosome"/>
</dbReference>
<dbReference type="GO" id="GO:0005737">
    <property type="term" value="C:cytoplasm"/>
    <property type="evidence" value="ECO:0007669"/>
    <property type="project" value="UniProtKB-ARBA"/>
</dbReference>
<dbReference type="GO" id="GO:0015935">
    <property type="term" value="C:small ribosomal subunit"/>
    <property type="evidence" value="ECO:0007669"/>
    <property type="project" value="InterPro"/>
</dbReference>
<dbReference type="GO" id="GO:0019843">
    <property type="term" value="F:rRNA binding"/>
    <property type="evidence" value="ECO:0007669"/>
    <property type="project" value="UniProtKB-UniRule"/>
</dbReference>
<dbReference type="GO" id="GO:0003735">
    <property type="term" value="F:structural constituent of ribosome"/>
    <property type="evidence" value="ECO:0007669"/>
    <property type="project" value="InterPro"/>
</dbReference>
<dbReference type="GO" id="GO:0000028">
    <property type="term" value="P:ribosomal small subunit assembly"/>
    <property type="evidence" value="ECO:0007669"/>
    <property type="project" value="TreeGrafter"/>
</dbReference>
<dbReference type="GO" id="GO:0006412">
    <property type="term" value="P:translation"/>
    <property type="evidence" value="ECO:0007669"/>
    <property type="project" value="UniProtKB-UniRule"/>
</dbReference>
<dbReference type="FunFam" id="3.30.860.10:FF:000001">
    <property type="entry name" value="30S ribosomal protein S19"/>
    <property type="match status" value="1"/>
</dbReference>
<dbReference type="Gene3D" id="3.30.860.10">
    <property type="entry name" value="30s Ribosomal Protein S19, Chain A"/>
    <property type="match status" value="1"/>
</dbReference>
<dbReference type="HAMAP" id="MF_00531">
    <property type="entry name" value="Ribosomal_uS19"/>
    <property type="match status" value="1"/>
</dbReference>
<dbReference type="InterPro" id="IPR002222">
    <property type="entry name" value="Ribosomal_uS19"/>
</dbReference>
<dbReference type="InterPro" id="IPR005732">
    <property type="entry name" value="Ribosomal_uS19_bac-type"/>
</dbReference>
<dbReference type="InterPro" id="IPR020934">
    <property type="entry name" value="Ribosomal_uS19_CS"/>
</dbReference>
<dbReference type="InterPro" id="IPR023575">
    <property type="entry name" value="Ribosomal_uS19_SF"/>
</dbReference>
<dbReference type="NCBIfam" id="TIGR01050">
    <property type="entry name" value="rpsS_bact"/>
    <property type="match status" value="1"/>
</dbReference>
<dbReference type="PANTHER" id="PTHR11880">
    <property type="entry name" value="RIBOSOMAL PROTEIN S19P FAMILY MEMBER"/>
    <property type="match status" value="1"/>
</dbReference>
<dbReference type="PANTHER" id="PTHR11880:SF8">
    <property type="entry name" value="SMALL RIBOSOMAL SUBUNIT PROTEIN US19M"/>
    <property type="match status" value="1"/>
</dbReference>
<dbReference type="Pfam" id="PF00203">
    <property type="entry name" value="Ribosomal_S19"/>
    <property type="match status" value="1"/>
</dbReference>
<dbReference type="PIRSF" id="PIRSF002144">
    <property type="entry name" value="Ribosomal_S19"/>
    <property type="match status" value="1"/>
</dbReference>
<dbReference type="PRINTS" id="PR00975">
    <property type="entry name" value="RIBOSOMALS19"/>
</dbReference>
<dbReference type="SUPFAM" id="SSF54570">
    <property type="entry name" value="Ribosomal protein S19"/>
    <property type="match status" value="1"/>
</dbReference>
<dbReference type="PROSITE" id="PS00323">
    <property type="entry name" value="RIBOSOMAL_S19"/>
    <property type="match status" value="1"/>
</dbReference>
<keyword id="KW-1185">Reference proteome</keyword>
<keyword id="KW-0687">Ribonucleoprotein</keyword>
<keyword id="KW-0689">Ribosomal protein</keyword>
<keyword id="KW-0694">RNA-binding</keyword>
<keyword id="KW-0699">rRNA-binding</keyword>
<comment type="function">
    <text evidence="1">Protein S19 forms a complex with S13 that binds strongly to the 16S ribosomal RNA.</text>
</comment>
<comment type="similarity">
    <text evidence="1">Belongs to the universal ribosomal protein uS19 family.</text>
</comment>